<accession>Q13UR9</accession>
<name>KDSB_PARXL</name>
<dbReference type="EC" id="2.7.7.38" evidence="1"/>
<dbReference type="EMBL" id="CP000270">
    <property type="protein sequence ID" value="ABE32170.1"/>
    <property type="status" value="ALT_INIT"/>
    <property type="molecule type" value="Genomic_DNA"/>
</dbReference>
<dbReference type="RefSeq" id="WP_011489669.1">
    <property type="nucleotide sequence ID" value="NC_007951.1"/>
</dbReference>
<dbReference type="SMR" id="Q13UR9"/>
<dbReference type="STRING" id="266265.Bxe_A0764"/>
<dbReference type="KEGG" id="bxb:DR64_2932"/>
<dbReference type="KEGG" id="bxe:Bxe_A0764"/>
<dbReference type="PATRIC" id="fig|266265.5.peg.3827"/>
<dbReference type="eggNOG" id="COG1212">
    <property type="taxonomic scope" value="Bacteria"/>
</dbReference>
<dbReference type="OrthoDB" id="9815559at2"/>
<dbReference type="UniPathway" id="UPA00030"/>
<dbReference type="UniPathway" id="UPA00358">
    <property type="reaction ID" value="UER00476"/>
</dbReference>
<dbReference type="Proteomes" id="UP000001817">
    <property type="component" value="Chromosome 1"/>
</dbReference>
<dbReference type="GO" id="GO:0005829">
    <property type="term" value="C:cytosol"/>
    <property type="evidence" value="ECO:0007669"/>
    <property type="project" value="TreeGrafter"/>
</dbReference>
<dbReference type="GO" id="GO:0008690">
    <property type="term" value="F:3-deoxy-manno-octulosonate cytidylyltransferase activity"/>
    <property type="evidence" value="ECO:0007669"/>
    <property type="project" value="UniProtKB-UniRule"/>
</dbReference>
<dbReference type="GO" id="GO:0033468">
    <property type="term" value="P:CMP-keto-3-deoxy-D-manno-octulosonic acid biosynthetic process"/>
    <property type="evidence" value="ECO:0007669"/>
    <property type="project" value="UniProtKB-UniRule"/>
</dbReference>
<dbReference type="GO" id="GO:0009103">
    <property type="term" value="P:lipopolysaccharide biosynthetic process"/>
    <property type="evidence" value="ECO:0007669"/>
    <property type="project" value="UniProtKB-UniRule"/>
</dbReference>
<dbReference type="CDD" id="cd02517">
    <property type="entry name" value="CMP-KDO-Synthetase"/>
    <property type="match status" value="1"/>
</dbReference>
<dbReference type="FunFam" id="3.90.550.10:FF:000011">
    <property type="entry name" value="3-deoxy-manno-octulosonate cytidylyltransferase"/>
    <property type="match status" value="1"/>
</dbReference>
<dbReference type="Gene3D" id="3.90.550.10">
    <property type="entry name" value="Spore Coat Polysaccharide Biosynthesis Protein SpsA, Chain A"/>
    <property type="match status" value="1"/>
</dbReference>
<dbReference type="HAMAP" id="MF_00057">
    <property type="entry name" value="KdsB"/>
    <property type="match status" value="1"/>
</dbReference>
<dbReference type="InterPro" id="IPR003329">
    <property type="entry name" value="Cytidylyl_trans"/>
</dbReference>
<dbReference type="InterPro" id="IPR004528">
    <property type="entry name" value="KdsB"/>
</dbReference>
<dbReference type="InterPro" id="IPR029044">
    <property type="entry name" value="Nucleotide-diphossugar_trans"/>
</dbReference>
<dbReference type="NCBIfam" id="TIGR00466">
    <property type="entry name" value="kdsB"/>
    <property type="match status" value="1"/>
</dbReference>
<dbReference type="NCBIfam" id="NF003952">
    <property type="entry name" value="PRK05450.1-5"/>
    <property type="match status" value="1"/>
</dbReference>
<dbReference type="NCBIfam" id="NF009905">
    <property type="entry name" value="PRK13368.1"/>
    <property type="match status" value="1"/>
</dbReference>
<dbReference type="PANTHER" id="PTHR42866">
    <property type="entry name" value="3-DEOXY-MANNO-OCTULOSONATE CYTIDYLYLTRANSFERASE"/>
    <property type="match status" value="1"/>
</dbReference>
<dbReference type="PANTHER" id="PTHR42866:SF2">
    <property type="entry name" value="3-DEOXY-MANNO-OCTULOSONATE CYTIDYLYLTRANSFERASE, MITOCHONDRIAL"/>
    <property type="match status" value="1"/>
</dbReference>
<dbReference type="Pfam" id="PF02348">
    <property type="entry name" value="CTP_transf_3"/>
    <property type="match status" value="1"/>
</dbReference>
<dbReference type="SUPFAM" id="SSF53448">
    <property type="entry name" value="Nucleotide-diphospho-sugar transferases"/>
    <property type="match status" value="1"/>
</dbReference>
<organism>
    <name type="scientific">Paraburkholderia xenovorans (strain LB400)</name>
    <dbReference type="NCBI Taxonomy" id="266265"/>
    <lineage>
        <taxon>Bacteria</taxon>
        <taxon>Pseudomonadati</taxon>
        <taxon>Pseudomonadota</taxon>
        <taxon>Betaproteobacteria</taxon>
        <taxon>Burkholderiales</taxon>
        <taxon>Burkholderiaceae</taxon>
        <taxon>Paraburkholderia</taxon>
    </lineage>
</organism>
<reference key="1">
    <citation type="journal article" date="2006" name="Proc. Natl. Acad. Sci. U.S.A.">
        <title>Burkholderia xenovorans LB400 harbors a multi-replicon, 9.73-Mbp genome shaped for versatility.</title>
        <authorList>
            <person name="Chain P.S.G."/>
            <person name="Denef V.J."/>
            <person name="Konstantinidis K.T."/>
            <person name="Vergez L.M."/>
            <person name="Agullo L."/>
            <person name="Reyes V.L."/>
            <person name="Hauser L."/>
            <person name="Cordova M."/>
            <person name="Gomez L."/>
            <person name="Gonzalez M."/>
            <person name="Land M."/>
            <person name="Lao V."/>
            <person name="Larimer F."/>
            <person name="LiPuma J.J."/>
            <person name="Mahenthiralingam E."/>
            <person name="Malfatti S.A."/>
            <person name="Marx C.J."/>
            <person name="Parnell J.J."/>
            <person name="Ramette A."/>
            <person name="Richardson P."/>
            <person name="Seeger M."/>
            <person name="Smith D."/>
            <person name="Spilker T."/>
            <person name="Sul W.J."/>
            <person name="Tsoi T.V."/>
            <person name="Ulrich L.E."/>
            <person name="Zhulin I.B."/>
            <person name="Tiedje J.M."/>
        </authorList>
    </citation>
    <scope>NUCLEOTIDE SEQUENCE [LARGE SCALE GENOMIC DNA]</scope>
    <source>
        <strain>LB400</strain>
    </source>
</reference>
<sequence length="266" mass="28270">MTHANTTTPPFIAVVPARLASTRLPNKPLADIGGKPMVVRVAERARESGAQQVLVASDAQAVLDAARAHGFEAVLTRADHPSGTDRLAEVAAQFGWSDDTIVVNVQGDEPLIDPALVCGVASHLAASGGCAIATAAHPITDPAEIFNPNVVKVVLDARGVALYFSRAPIPWARDAYQPHWPNVAAMPTPPAPAVVHRHIGLYAYRAQFLRTYPSLAISPIEQVEALEQLRAMWHGERIAVLVTHDVPLPGVDTPADLARVQALFGS</sequence>
<comment type="function">
    <text evidence="1">Activates KDO (a required 8-carbon sugar) for incorporation into bacterial lipopolysaccharide in Gram-negative bacteria.</text>
</comment>
<comment type="catalytic activity">
    <reaction evidence="1">
        <text>3-deoxy-alpha-D-manno-oct-2-ulosonate + CTP = CMP-3-deoxy-beta-D-manno-octulosonate + diphosphate</text>
        <dbReference type="Rhea" id="RHEA:23448"/>
        <dbReference type="ChEBI" id="CHEBI:33019"/>
        <dbReference type="ChEBI" id="CHEBI:37563"/>
        <dbReference type="ChEBI" id="CHEBI:85986"/>
        <dbReference type="ChEBI" id="CHEBI:85987"/>
        <dbReference type="EC" id="2.7.7.38"/>
    </reaction>
</comment>
<comment type="pathway">
    <text evidence="1">Nucleotide-sugar biosynthesis; CMP-3-deoxy-D-manno-octulosonate biosynthesis; CMP-3-deoxy-D-manno-octulosonate from 3-deoxy-D-manno-octulosonate and CTP: step 1/1.</text>
</comment>
<comment type="pathway">
    <text evidence="1">Bacterial outer membrane biogenesis; lipopolysaccharide biosynthesis.</text>
</comment>
<comment type="subcellular location">
    <subcellularLocation>
        <location evidence="1">Cytoplasm</location>
    </subcellularLocation>
</comment>
<comment type="similarity">
    <text evidence="1">Belongs to the KdsB family.</text>
</comment>
<comment type="sequence caution" evidence="2">
    <conflict type="erroneous initiation">
        <sequence resource="EMBL-CDS" id="ABE32170"/>
    </conflict>
</comment>
<protein>
    <recommendedName>
        <fullName evidence="1">3-deoxy-manno-octulosonate cytidylyltransferase</fullName>
        <ecNumber evidence="1">2.7.7.38</ecNumber>
    </recommendedName>
    <alternativeName>
        <fullName evidence="1">CMP-2-keto-3-deoxyoctulosonic acid synthase</fullName>
        <shortName evidence="1">CKS</shortName>
        <shortName evidence="1">CMP-KDO synthase</shortName>
    </alternativeName>
</protein>
<gene>
    <name evidence="1" type="primary">kdsB</name>
    <name type="ordered locus">Bxeno_A3632</name>
    <name type="ORF">Bxe_A0764</name>
</gene>
<feature type="chain" id="PRO_0000370043" description="3-deoxy-manno-octulosonate cytidylyltransferase">
    <location>
        <begin position="1"/>
        <end position="266"/>
    </location>
</feature>
<evidence type="ECO:0000255" key="1">
    <source>
        <dbReference type="HAMAP-Rule" id="MF_00057"/>
    </source>
</evidence>
<evidence type="ECO:0000305" key="2"/>
<proteinExistence type="inferred from homology"/>
<keyword id="KW-0963">Cytoplasm</keyword>
<keyword id="KW-0448">Lipopolysaccharide biosynthesis</keyword>
<keyword id="KW-0548">Nucleotidyltransferase</keyword>
<keyword id="KW-1185">Reference proteome</keyword>
<keyword id="KW-0808">Transferase</keyword>